<accession>B2HYW1</accession>
<name>Y1536_ACIBC</name>
<reference key="1">
    <citation type="journal article" date="2008" name="Antimicrob. Agents Chemother.">
        <title>Whole-genome pyrosequencing of an epidemic multidrug-resistant Acinetobacter baumannii strain belonging to the European clone II group.</title>
        <authorList>
            <person name="Iacono M."/>
            <person name="Villa L."/>
            <person name="Fortini D."/>
            <person name="Bordoni R."/>
            <person name="Imperi F."/>
            <person name="Bonnal R.J."/>
            <person name="Sicheritz-Ponten T."/>
            <person name="De Bellis G."/>
            <person name="Visca P."/>
            <person name="Cassone A."/>
            <person name="Carattoli A."/>
        </authorList>
    </citation>
    <scope>NUCLEOTIDE SEQUENCE [LARGE SCALE GENOMIC DNA]</scope>
    <source>
        <strain>ACICU</strain>
    </source>
</reference>
<dbReference type="EMBL" id="CP000863">
    <property type="protein sequence ID" value="ACC56848.1"/>
    <property type="molecule type" value="Genomic_DNA"/>
</dbReference>
<dbReference type="RefSeq" id="WP_000907230.1">
    <property type="nucleotide sequence ID" value="NZ_CP031380.1"/>
</dbReference>
<dbReference type="SMR" id="B2HYW1"/>
<dbReference type="KEGG" id="abc:ACICU_01536"/>
<dbReference type="HOGENOM" id="CLU_062974_2_2_6"/>
<dbReference type="Proteomes" id="UP000008839">
    <property type="component" value="Chromosome"/>
</dbReference>
<dbReference type="GO" id="GO:0005829">
    <property type="term" value="C:cytosol"/>
    <property type="evidence" value="ECO:0007669"/>
    <property type="project" value="TreeGrafter"/>
</dbReference>
<dbReference type="GO" id="GO:0003677">
    <property type="term" value="F:DNA binding"/>
    <property type="evidence" value="ECO:0007669"/>
    <property type="project" value="UniProtKB-UniRule"/>
</dbReference>
<dbReference type="GO" id="GO:0006355">
    <property type="term" value="P:regulation of DNA-templated transcription"/>
    <property type="evidence" value="ECO:0007669"/>
    <property type="project" value="UniProtKB-UniRule"/>
</dbReference>
<dbReference type="FunFam" id="1.10.10.200:FF:000001">
    <property type="entry name" value="Probable transcriptional regulatory protein YebC"/>
    <property type="match status" value="1"/>
</dbReference>
<dbReference type="FunFam" id="3.30.70.980:FF:000002">
    <property type="entry name" value="Probable transcriptional regulatory protein YebC"/>
    <property type="match status" value="1"/>
</dbReference>
<dbReference type="Gene3D" id="1.10.10.200">
    <property type="match status" value="1"/>
</dbReference>
<dbReference type="Gene3D" id="3.30.70.980">
    <property type="match status" value="2"/>
</dbReference>
<dbReference type="HAMAP" id="MF_00693">
    <property type="entry name" value="Transcrip_reg_TACO1"/>
    <property type="match status" value="1"/>
</dbReference>
<dbReference type="InterPro" id="IPR017856">
    <property type="entry name" value="Integrase-like_N"/>
</dbReference>
<dbReference type="InterPro" id="IPR048300">
    <property type="entry name" value="TACO1_YebC-like_2nd/3rd_dom"/>
</dbReference>
<dbReference type="InterPro" id="IPR049083">
    <property type="entry name" value="TACO1_YebC_N"/>
</dbReference>
<dbReference type="InterPro" id="IPR002876">
    <property type="entry name" value="Transcrip_reg_TACO1-like"/>
</dbReference>
<dbReference type="InterPro" id="IPR026564">
    <property type="entry name" value="Transcrip_reg_TACO1-like_dom3"/>
</dbReference>
<dbReference type="InterPro" id="IPR029072">
    <property type="entry name" value="YebC-like"/>
</dbReference>
<dbReference type="NCBIfam" id="NF001030">
    <property type="entry name" value="PRK00110.1"/>
    <property type="match status" value="1"/>
</dbReference>
<dbReference type="NCBIfam" id="NF009044">
    <property type="entry name" value="PRK12378.1"/>
    <property type="match status" value="1"/>
</dbReference>
<dbReference type="NCBIfam" id="TIGR01033">
    <property type="entry name" value="YebC/PmpR family DNA-binding transcriptional regulator"/>
    <property type="match status" value="1"/>
</dbReference>
<dbReference type="PANTHER" id="PTHR12532:SF6">
    <property type="entry name" value="TRANSCRIPTIONAL REGULATORY PROTEIN YEBC-RELATED"/>
    <property type="match status" value="1"/>
</dbReference>
<dbReference type="PANTHER" id="PTHR12532">
    <property type="entry name" value="TRANSLATIONAL ACTIVATOR OF CYTOCHROME C OXIDASE 1"/>
    <property type="match status" value="1"/>
</dbReference>
<dbReference type="Pfam" id="PF20772">
    <property type="entry name" value="TACO1_YebC_N"/>
    <property type="match status" value="1"/>
</dbReference>
<dbReference type="Pfam" id="PF01709">
    <property type="entry name" value="Transcrip_reg"/>
    <property type="match status" value="1"/>
</dbReference>
<dbReference type="SUPFAM" id="SSF75625">
    <property type="entry name" value="YebC-like"/>
    <property type="match status" value="1"/>
</dbReference>
<comment type="subcellular location">
    <subcellularLocation>
        <location evidence="1">Cytoplasm</location>
    </subcellularLocation>
</comment>
<comment type="similarity">
    <text evidence="1">Belongs to the TACO1 family.</text>
</comment>
<sequence>MAGHSKWANIKHRKAKQDASRGKVFTKYIREIVTAAKLGGADPASNPRLRAVVEKALSVNMTRDTINRAIQRGVGGEDNDDLKEVTYEGYGVGGVAVLVETMTDNLNRTVPDVRHCFSKTNGNLGTAGSVAYLFTKRGEITFDDVSLEDKIMDVALEAGAEDIEVSEDEILVITSPETFGEVQDALAAAGLKSDNAEVVMSPSTKAEITDIDQAKQVMKLIDMLEDLDDVQNVYTNVEFSDEVLAQLDA</sequence>
<protein>
    <recommendedName>
        <fullName evidence="1">Probable transcriptional regulatory protein ACICU_01536</fullName>
    </recommendedName>
</protein>
<keyword id="KW-0963">Cytoplasm</keyword>
<keyword id="KW-0238">DNA-binding</keyword>
<keyword id="KW-0804">Transcription</keyword>
<keyword id="KW-0805">Transcription regulation</keyword>
<feature type="chain" id="PRO_1000132137" description="Probable transcriptional regulatory protein ACICU_01536">
    <location>
        <begin position="1"/>
        <end position="249"/>
    </location>
</feature>
<evidence type="ECO:0000255" key="1">
    <source>
        <dbReference type="HAMAP-Rule" id="MF_00693"/>
    </source>
</evidence>
<proteinExistence type="inferred from homology"/>
<organism>
    <name type="scientific">Acinetobacter baumannii (strain ACICU)</name>
    <dbReference type="NCBI Taxonomy" id="405416"/>
    <lineage>
        <taxon>Bacteria</taxon>
        <taxon>Pseudomonadati</taxon>
        <taxon>Pseudomonadota</taxon>
        <taxon>Gammaproteobacteria</taxon>
        <taxon>Moraxellales</taxon>
        <taxon>Moraxellaceae</taxon>
        <taxon>Acinetobacter</taxon>
        <taxon>Acinetobacter calcoaceticus/baumannii complex</taxon>
    </lineage>
</organism>
<gene>
    <name type="ordered locus">ACICU_01536</name>
</gene>